<keyword id="KW-1003">Cell membrane</keyword>
<keyword id="KW-0449">Lipoprotein</keyword>
<keyword id="KW-0472">Membrane</keyword>
<keyword id="KW-0564">Palmitate</keyword>
<keyword id="KW-0732">Signal</keyword>
<name>Y483_STAAC</name>
<accession>Q5HIN4</accession>
<sequence>MKCFQKLYIFILILIVLMAGCESNKITGDSKETQIKKSFAKTLDVYPTKNLEDFYDKEGYRDGEFKKGDKGKWVIRSEMTTELKNENMVSKGMVIRLNRNSRTCTGEYFVRIVKEDSEGKVYSDERKYPVKMENNKIITLKPIDDEKVKKEIEEFKFFVQYGNFKELENYKDGEVTYNPEAPIYSAQYQLKNSDYNVEQLRKRYNITTKKAPKLLLKGSGNLKGSSVGYKNIEFTFVENKEENIYFTDSINFNPSEDK</sequence>
<dbReference type="EMBL" id="CP000046">
    <property type="protein sequence ID" value="AAW37604.1"/>
    <property type="molecule type" value="Genomic_DNA"/>
</dbReference>
<dbReference type="SMR" id="Q5HIN4"/>
<dbReference type="KEGG" id="sac:SACOL0483"/>
<dbReference type="HOGENOM" id="CLU_071589_0_1_9"/>
<dbReference type="Proteomes" id="UP000000530">
    <property type="component" value="Chromosome"/>
</dbReference>
<dbReference type="GO" id="GO:0005886">
    <property type="term" value="C:plasma membrane"/>
    <property type="evidence" value="ECO:0007669"/>
    <property type="project" value="UniProtKB-SubCell"/>
</dbReference>
<dbReference type="Gene3D" id="2.50.20.40">
    <property type="match status" value="1"/>
</dbReference>
<dbReference type="InterPro" id="IPR007595">
    <property type="entry name" value="Csa"/>
</dbReference>
<dbReference type="InterPro" id="IPR038641">
    <property type="entry name" value="Csa_sf"/>
</dbReference>
<dbReference type="NCBIfam" id="TIGR01742">
    <property type="entry name" value="SA_tandem_lipo"/>
    <property type="match status" value="1"/>
</dbReference>
<dbReference type="Pfam" id="PF04507">
    <property type="entry name" value="DUF576"/>
    <property type="match status" value="1"/>
</dbReference>
<dbReference type="PROSITE" id="PS51257">
    <property type="entry name" value="PROKAR_LIPOPROTEIN"/>
    <property type="match status" value="1"/>
</dbReference>
<evidence type="ECO:0000255" key="1">
    <source>
        <dbReference type="PROSITE-ProRule" id="PRU00303"/>
    </source>
</evidence>
<evidence type="ECO:0000305" key="2"/>
<reference key="1">
    <citation type="journal article" date="2005" name="J. Bacteriol.">
        <title>Insights on evolution of virulence and resistance from the complete genome analysis of an early methicillin-resistant Staphylococcus aureus strain and a biofilm-producing methicillin-resistant Staphylococcus epidermidis strain.</title>
        <authorList>
            <person name="Gill S.R."/>
            <person name="Fouts D.E."/>
            <person name="Archer G.L."/>
            <person name="Mongodin E.F."/>
            <person name="DeBoy R.T."/>
            <person name="Ravel J."/>
            <person name="Paulsen I.T."/>
            <person name="Kolonay J.F."/>
            <person name="Brinkac L.M."/>
            <person name="Beanan M.J."/>
            <person name="Dodson R.J."/>
            <person name="Daugherty S.C."/>
            <person name="Madupu R."/>
            <person name="Angiuoli S.V."/>
            <person name="Durkin A.S."/>
            <person name="Haft D.H."/>
            <person name="Vamathevan J.J."/>
            <person name="Khouri H."/>
            <person name="Utterback T.R."/>
            <person name="Lee C."/>
            <person name="Dimitrov G."/>
            <person name="Jiang L."/>
            <person name="Qin H."/>
            <person name="Weidman J."/>
            <person name="Tran K."/>
            <person name="Kang K.H."/>
            <person name="Hance I.R."/>
            <person name="Nelson K.E."/>
            <person name="Fraser C.M."/>
        </authorList>
    </citation>
    <scope>NUCLEOTIDE SEQUENCE [LARGE SCALE GENOMIC DNA]</scope>
    <source>
        <strain>COL</strain>
    </source>
</reference>
<comment type="subcellular location">
    <subcellularLocation>
        <location evidence="1">Cell membrane</location>
        <topology evidence="1">Lipid-anchor</topology>
    </subcellularLocation>
</comment>
<comment type="similarity">
    <text evidence="2">Belongs to the staphylococcal tandem lipoprotein family.</text>
</comment>
<proteinExistence type="inferred from homology"/>
<gene>
    <name type="ordered locus">SACOL0483</name>
</gene>
<protein>
    <recommendedName>
        <fullName>Uncharacterized lipoprotein SACOL0483</fullName>
    </recommendedName>
</protein>
<feature type="signal peptide" evidence="1">
    <location>
        <begin position="1"/>
        <end position="20"/>
    </location>
</feature>
<feature type="chain" id="PRO_0000282110" description="Uncharacterized lipoprotein SACOL0483">
    <location>
        <begin position="21"/>
        <end position="258"/>
    </location>
</feature>
<feature type="lipid moiety-binding region" description="N-palmitoyl cysteine" evidence="1">
    <location>
        <position position="21"/>
    </location>
</feature>
<feature type="lipid moiety-binding region" description="S-diacylglycerol cysteine" evidence="1">
    <location>
        <position position="21"/>
    </location>
</feature>
<organism>
    <name type="scientific">Staphylococcus aureus (strain COL)</name>
    <dbReference type="NCBI Taxonomy" id="93062"/>
    <lineage>
        <taxon>Bacteria</taxon>
        <taxon>Bacillati</taxon>
        <taxon>Bacillota</taxon>
        <taxon>Bacilli</taxon>
        <taxon>Bacillales</taxon>
        <taxon>Staphylococcaceae</taxon>
        <taxon>Staphylococcus</taxon>
    </lineage>
</organism>